<keyword id="KW-0002">3D-structure</keyword>
<keyword id="KW-0963">Cytoplasm</keyword>
<keyword id="KW-0653">Protein transport</keyword>
<keyword id="KW-1185">Reference proteome</keyword>
<keyword id="KW-0813">Transport</keyword>
<keyword id="KW-0843">Virulence</keyword>
<gene>
    <name evidence="5" type="primary">lvgA</name>
    <name evidence="7" type="ordered locus">lpg0525</name>
</gene>
<accession>Q5ZY48</accession>
<comment type="function">
    <text evidence="1 2 3 4">Component of the Dot/Icm type IVB secretion system (T4BSS), which is used to inject bacterial effector proteins into eukaryotic host cells (PubMed:28714967, PubMed:32457311, PubMed:32513920). Part of a subcomplex which recruits effector proteins and delivers them to the core transmembrane subcomplex (PubMed:32457311, PubMed:32513920). Is a critical subunit for binding a subset of effector proteins (PubMed:28714967, PubMed:32457311). Recognizes more than one type of binding motif (PubMed:32457311). May be a critical factor that confers host specificity (PubMed:16803597).</text>
</comment>
<comment type="subunit">
    <text evidence="1 2 3 4">The T4BSS is a complex nanomachine composed of several subcomplexes. This subunit is part of the Type IV Coupling Complex (T4CC), a subcomplex composed of the DotLMNYZ core and the IcmSW-LvgA adapter subunits, linked by the C-terminal tail of DotL (PubMed:28714967, PubMed:32457311, PubMed:32513920). Interacts with DotL, IcmS and IcmW (PubMed:16803597, PubMed:28714967). Interacts with various effector proteins, including VpdB, SetA, PieA and SidH (PubMed:32457311).</text>
</comment>
<comment type="subcellular location">
    <subcellularLocation>
        <location evidence="1">Cytoplasm</location>
    </subcellularLocation>
</comment>
<comment type="induction">
    <text evidence="1">Constitutively expressed in vitro.</text>
</comment>
<comment type="disruption phenotype">
    <text evidence="1">Mutant is differentially attenuated in diverse hosts (PubMed:16803597). Inactivation of the gene causes a minimal defect in growth in the human monocytic cell line U937 and the environmental host A.castellanii, but mutant is severely attenuated for intracellular growth in mouse macrophages (PubMed:16803597). Mutant appears to assemble a fully functional Dot/Icm complex and exhibits wild-type levels of contact-dependent cytotoxicity (PubMed:16803597).</text>
</comment>
<sequence length="208" mass="23506">MADGDIEIKAGFVDTDLDDRKLTMIDDLNNPLAIVERVYLIWWHWADFHLHVISPHIDTITPAIVIEPELIPGSNDHEFVYSIHDSGSKLSTSKSQDMFSAGMSMCKLFYTIEKMVYILVERLKSGGVSMEAEVQIAFAGHEIAQRKAFESIINLPYNVVVTNFDPGIWGEKYLQNVKRLADKGYGYPPESPRKIYMHPVSSGTTARK</sequence>
<dbReference type="EMBL" id="AE017354">
    <property type="protein sequence ID" value="AAU26621.1"/>
    <property type="molecule type" value="Genomic_DNA"/>
</dbReference>
<dbReference type="RefSeq" id="WP_010946272.1">
    <property type="nucleotide sequence ID" value="NC_002942.5"/>
</dbReference>
<dbReference type="RefSeq" id="YP_094568.1">
    <property type="nucleotide sequence ID" value="NC_002942.5"/>
</dbReference>
<dbReference type="PDB" id="5X90">
    <property type="method" value="X-ray"/>
    <property type="resolution" value="2.80 A"/>
    <property type="chains" value="D=25-195, H=22-193"/>
</dbReference>
<dbReference type="PDB" id="7BWK">
    <property type="method" value="X-ray"/>
    <property type="resolution" value="2.80 A"/>
    <property type="chains" value="D/I=1-208"/>
</dbReference>
<dbReference type="PDBsum" id="5X90"/>
<dbReference type="PDBsum" id="7BWK"/>
<dbReference type="SMR" id="Q5ZY48"/>
<dbReference type="STRING" id="272624.lpg0525"/>
<dbReference type="PaxDb" id="272624-lpg0525"/>
<dbReference type="GeneID" id="57034526"/>
<dbReference type="KEGG" id="lpn:lpg0525"/>
<dbReference type="PATRIC" id="fig|272624.6.peg.549"/>
<dbReference type="eggNOG" id="ENOG5031DQG">
    <property type="taxonomic scope" value="Bacteria"/>
</dbReference>
<dbReference type="HOGENOM" id="CLU_1314124_0_0_6"/>
<dbReference type="OrthoDB" id="5645946at2"/>
<dbReference type="Proteomes" id="UP000000609">
    <property type="component" value="Chromosome"/>
</dbReference>
<dbReference type="GO" id="GO:0005737">
    <property type="term" value="C:cytoplasm"/>
    <property type="evidence" value="ECO:0007669"/>
    <property type="project" value="UniProtKB-SubCell"/>
</dbReference>
<dbReference type="GO" id="GO:0015031">
    <property type="term" value="P:protein transport"/>
    <property type="evidence" value="ECO:0007669"/>
    <property type="project" value="UniProtKB-KW"/>
</dbReference>
<reference key="1">
    <citation type="journal article" date="2004" name="Science">
        <title>The genomic sequence of the accidental pathogen Legionella pneumophila.</title>
        <authorList>
            <person name="Chien M."/>
            <person name="Morozova I."/>
            <person name="Shi S."/>
            <person name="Sheng H."/>
            <person name="Chen J."/>
            <person name="Gomez S.M."/>
            <person name="Asamani G."/>
            <person name="Hill K."/>
            <person name="Nuara J."/>
            <person name="Feder M."/>
            <person name="Rineer J."/>
            <person name="Greenberg J.J."/>
            <person name="Steshenko V."/>
            <person name="Park S.H."/>
            <person name="Zhao B."/>
            <person name="Teplitskaya E."/>
            <person name="Edwards J.R."/>
            <person name="Pampou S."/>
            <person name="Georghiou A."/>
            <person name="Chou I.-C."/>
            <person name="Iannuccilli W."/>
            <person name="Ulz M.E."/>
            <person name="Kim D.H."/>
            <person name="Geringer-Sameth A."/>
            <person name="Goldsberry C."/>
            <person name="Morozov P."/>
            <person name="Fischer S.G."/>
            <person name="Segal G."/>
            <person name="Qu X."/>
            <person name="Rzhetsky A."/>
            <person name="Zhang P."/>
            <person name="Cayanis E."/>
            <person name="De Jong P.J."/>
            <person name="Ju J."/>
            <person name="Kalachikov S."/>
            <person name="Shuman H.A."/>
            <person name="Russo J.J."/>
        </authorList>
    </citation>
    <scope>NUCLEOTIDE SEQUENCE [LARGE SCALE GENOMIC DNA]</scope>
    <source>
        <strain>Philadelphia 1 / ATCC 33152 / DSM 7513</strain>
    </source>
</reference>
<reference key="2">
    <citation type="journal article" date="2006" name="Mol. Microbiol.">
        <title>The Legionella pneumophila IcmS-LvgA protein complex is important for Dot/Icm-dependent intracellular growth.</title>
        <authorList>
            <person name="Vincent C.D."/>
            <person name="Vogel J.P."/>
        </authorList>
    </citation>
    <scope>FUNCTION</scope>
    <scope>INTERACTION WITH ICMS</scope>
    <scope>SUBCELLULAR LOCATION</scope>
    <scope>INDUCTION</scope>
    <scope>DISRUPTION PHENOTYPE</scope>
    <source>
        <strain>Philadelphia 1 / Lp02</strain>
    </source>
</reference>
<reference key="3">
    <citation type="journal article" date="2020" name="Nat. Commun.">
        <title>Mechanism of effector capture and delivery by the type IV secretion system from Legionella pneumophila.</title>
        <authorList>
            <person name="Meir A."/>
            <person name="Mace K."/>
            <person name="Lukoyanova N."/>
            <person name="Chetrit D."/>
            <person name="Hospenthal M.K."/>
            <person name="Redzej A."/>
            <person name="Roy C."/>
            <person name="Waksman G."/>
        </authorList>
    </citation>
    <scope>FUNCTION</scope>
    <scope>SUBUNIT</scope>
    <source>
        <strain>Philadelphia 1 / Lp01</strain>
    </source>
</reference>
<reference evidence="8" key="4">
    <citation type="journal article" date="2017" name="Nat. Microbiol.">
        <title>Architecture of the type IV coupling protein complex of Legionella pneumophila.</title>
        <authorList>
            <person name="Kwak M.J."/>
            <person name="Kim J.D."/>
            <person name="Kim H."/>
            <person name="Kim C."/>
            <person name="Bowman J.W."/>
            <person name="Kim S."/>
            <person name="Joo K."/>
            <person name="Lee J."/>
            <person name="Jin K.S."/>
            <person name="Kim Y.G."/>
            <person name="Lee N.K."/>
            <person name="Jung J.U."/>
            <person name="Oh B.H."/>
        </authorList>
    </citation>
    <scope>X-RAY CRYSTALLOGRAPHY (2.80 ANGSTROMS) OF 22-195 IN COMPLEX WITH DOTL; ICMS AND ICMW</scope>
    <scope>FUNCTION</scope>
    <scope>SUBUNIT</scope>
    <source>
        <strain>Philadelphia 1 / ATCC 33152 / DSM 7513</strain>
    </source>
</reference>
<reference evidence="9" key="5">
    <citation type="journal article" date="2020" name="Nat. Commun.">
        <title>Structural basis for effector protein recognition by the Dot/Icm Type IVB coupling protein complex.</title>
        <authorList>
            <person name="Kim H."/>
            <person name="Kubori T."/>
            <person name="Yamazaki K."/>
            <person name="Kwak M.J."/>
            <person name="Park S.Y."/>
            <person name="Nagai H."/>
            <person name="Vogel J.P."/>
            <person name="Oh B.H."/>
        </authorList>
    </citation>
    <scope>X-RAY CRYSTALLOGRAPHY (2.80 ANGSTROMS) IN COMPLEX WITH DOTL; ICMS; ICMW AND VPDB</scope>
    <scope>FUNCTION</scope>
    <scope>SUBUNIT</scope>
    <scope>MUTAGENESIS OF ILE-153</scope>
</reference>
<protein>
    <recommendedName>
        <fullName evidence="6">Type 4 adapter protein LvgA</fullName>
    </recommendedName>
</protein>
<evidence type="ECO:0000269" key="1">
    <source>
    </source>
</evidence>
<evidence type="ECO:0000269" key="2">
    <source>
    </source>
</evidence>
<evidence type="ECO:0000269" key="3">
    <source>
    </source>
</evidence>
<evidence type="ECO:0000269" key="4">
    <source>
    </source>
</evidence>
<evidence type="ECO:0000303" key="5">
    <source>
    </source>
</evidence>
<evidence type="ECO:0000305" key="6"/>
<evidence type="ECO:0000312" key="7">
    <source>
        <dbReference type="EMBL" id="AAU26621.1"/>
    </source>
</evidence>
<evidence type="ECO:0007744" key="8">
    <source>
        <dbReference type="PDB" id="5X90"/>
    </source>
</evidence>
<evidence type="ECO:0007744" key="9">
    <source>
        <dbReference type="PDB" id="7BWK"/>
    </source>
</evidence>
<evidence type="ECO:0007829" key="10">
    <source>
        <dbReference type="PDB" id="5X90"/>
    </source>
</evidence>
<evidence type="ECO:0007829" key="11">
    <source>
        <dbReference type="PDB" id="7BWK"/>
    </source>
</evidence>
<feature type="chain" id="PRO_0000455597" description="Type 4 adapter protein LvgA">
    <location>
        <begin position="1"/>
        <end position="208"/>
    </location>
</feature>
<feature type="mutagenesis site" description="Cannot bind the effector protein VpdB. Decreases binding affinity for SetA, PieA and SidH." evidence="3">
    <original>I</original>
    <variation>E</variation>
    <location>
        <position position="153"/>
    </location>
</feature>
<feature type="helix" evidence="10">
    <location>
        <begin position="26"/>
        <end position="29"/>
    </location>
</feature>
<feature type="helix" evidence="10">
    <location>
        <begin position="34"/>
        <end position="44"/>
    </location>
</feature>
<feature type="strand" evidence="10">
    <location>
        <begin position="47"/>
        <end position="55"/>
    </location>
</feature>
<feature type="strand" evidence="10">
    <location>
        <begin position="64"/>
        <end position="66"/>
    </location>
</feature>
<feature type="turn" evidence="10">
    <location>
        <begin position="72"/>
        <end position="75"/>
    </location>
</feature>
<feature type="strand" evidence="10">
    <location>
        <begin position="83"/>
        <end position="85"/>
    </location>
</feature>
<feature type="strand" evidence="10">
    <location>
        <begin position="87"/>
        <end position="94"/>
    </location>
</feature>
<feature type="helix" evidence="10">
    <location>
        <begin position="95"/>
        <end position="97"/>
    </location>
</feature>
<feature type="turn" evidence="10">
    <location>
        <begin position="98"/>
        <end position="100"/>
    </location>
</feature>
<feature type="helix" evidence="10">
    <location>
        <begin position="106"/>
        <end position="124"/>
    </location>
</feature>
<feature type="turn" evidence="10">
    <location>
        <begin position="125"/>
        <end position="127"/>
    </location>
</feature>
<feature type="strand" evidence="11">
    <location>
        <begin position="130"/>
        <end position="132"/>
    </location>
</feature>
<feature type="strand" evidence="10">
    <location>
        <begin position="134"/>
        <end position="140"/>
    </location>
</feature>
<feature type="helix" evidence="10">
    <location>
        <begin position="142"/>
        <end position="152"/>
    </location>
</feature>
<feature type="strand" evidence="10">
    <location>
        <begin position="155"/>
        <end position="157"/>
    </location>
</feature>
<feature type="strand" evidence="10">
    <location>
        <begin position="159"/>
        <end position="161"/>
    </location>
</feature>
<feature type="helix" evidence="10">
    <location>
        <begin position="168"/>
        <end position="183"/>
    </location>
</feature>
<feature type="helix" evidence="11">
    <location>
        <begin position="195"/>
        <end position="197"/>
    </location>
</feature>
<organism>
    <name type="scientific">Legionella pneumophila subsp. pneumophila (strain Philadelphia 1 / ATCC 33152 / DSM 7513)</name>
    <dbReference type="NCBI Taxonomy" id="272624"/>
    <lineage>
        <taxon>Bacteria</taxon>
        <taxon>Pseudomonadati</taxon>
        <taxon>Pseudomonadota</taxon>
        <taxon>Gammaproteobacteria</taxon>
        <taxon>Legionellales</taxon>
        <taxon>Legionellaceae</taxon>
        <taxon>Legionella</taxon>
    </lineage>
</organism>
<proteinExistence type="evidence at protein level"/>
<name>LVGA_LEGPH</name>